<gene>
    <name evidence="1" type="primary">rppH</name>
    <name evidence="1" type="synonym">nudH</name>
    <name type="ordered locus">NT01EI_3259</name>
</gene>
<comment type="function">
    <text evidence="1">Accelerates the degradation of transcripts by removing pyrophosphate from the 5'-end of triphosphorylated RNA, leading to a more labile monophosphorylated state that can stimulate subsequent ribonuclease cleavage.</text>
</comment>
<comment type="cofactor">
    <cofactor evidence="1">
        <name>a divalent metal cation</name>
        <dbReference type="ChEBI" id="CHEBI:60240"/>
    </cofactor>
</comment>
<comment type="similarity">
    <text evidence="1">Belongs to the Nudix hydrolase family. RppH subfamily.</text>
</comment>
<evidence type="ECO:0000255" key="1">
    <source>
        <dbReference type="HAMAP-Rule" id="MF_00298"/>
    </source>
</evidence>
<sequence>MIDDDGYRPNVGIVICNRQGQVLWARRYGQNSWQFPQGGINAGETAEQAMYRELFEEVGLGRKDVKILASTRNWLRYKLPKRLVRWDTKPVCIGQKQRWFLLQLQCSEAEINMQRSNTPEFDGWRWVSYWYPVRQVVSFKRDVYRRVMKEFSSVVMSLQESVAQGGRSAPGYRRKRG</sequence>
<proteinExistence type="inferred from homology"/>
<accession>C5BGJ4</accession>
<organism>
    <name type="scientific">Edwardsiella ictaluri (strain 93-146)</name>
    <dbReference type="NCBI Taxonomy" id="634503"/>
    <lineage>
        <taxon>Bacteria</taxon>
        <taxon>Pseudomonadati</taxon>
        <taxon>Pseudomonadota</taxon>
        <taxon>Gammaproteobacteria</taxon>
        <taxon>Enterobacterales</taxon>
        <taxon>Hafniaceae</taxon>
        <taxon>Edwardsiella</taxon>
    </lineage>
</organism>
<reference key="1">
    <citation type="submission" date="2009-03" db="EMBL/GenBank/DDBJ databases">
        <title>Complete genome sequence of Edwardsiella ictaluri 93-146.</title>
        <authorList>
            <person name="Williams M.L."/>
            <person name="Gillaspy A.F."/>
            <person name="Dyer D.W."/>
            <person name="Thune R.L."/>
            <person name="Waldbieser G.C."/>
            <person name="Schuster S.C."/>
            <person name="Gipson J."/>
            <person name="Zaitshik J."/>
            <person name="Landry C."/>
            <person name="Lawrence M.L."/>
        </authorList>
    </citation>
    <scope>NUCLEOTIDE SEQUENCE [LARGE SCALE GENOMIC DNA]</scope>
    <source>
        <strain>93-146</strain>
    </source>
</reference>
<name>RPPH_EDWI9</name>
<dbReference type="EC" id="3.6.1.-" evidence="1"/>
<dbReference type="EMBL" id="CP001600">
    <property type="protein sequence ID" value="ACR70400.1"/>
    <property type="molecule type" value="Genomic_DNA"/>
</dbReference>
<dbReference type="RefSeq" id="WP_015872482.1">
    <property type="nucleotide sequence ID" value="NZ_CP169062.1"/>
</dbReference>
<dbReference type="SMR" id="C5BGJ4"/>
<dbReference type="STRING" id="67780.B6E78_07925"/>
<dbReference type="GeneID" id="69540123"/>
<dbReference type="KEGG" id="eic:NT01EI_3259"/>
<dbReference type="PATRIC" id="fig|634503.3.peg.2905"/>
<dbReference type="HOGENOM" id="CLU_087195_3_2_6"/>
<dbReference type="OrthoDB" id="9816040at2"/>
<dbReference type="Proteomes" id="UP000001485">
    <property type="component" value="Chromosome"/>
</dbReference>
<dbReference type="GO" id="GO:0005737">
    <property type="term" value="C:cytoplasm"/>
    <property type="evidence" value="ECO:0007669"/>
    <property type="project" value="TreeGrafter"/>
</dbReference>
<dbReference type="GO" id="GO:0046872">
    <property type="term" value="F:metal ion binding"/>
    <property type="evidence" value="ECO:0007669"/>
    <property type="project" value="UniProtKB-KW"/>
</dbReference>
<dbReference type="GO" id="GO:0034353">
    <property type="term" value="F:mRNA 5'-diphosphatase activity"/>
    <property type="evidence" value="ECO:0007669"/>
    <property type="project" value="TreeGrafter"/>
</dbReference>
<dbReference type="GO" id="GO:0006402">
    <property type="term" value="P:mRNA catabolic process"/>
    <property type="evidence" value="ECO:0007669"/>
    <property type="project" value="TreeGrafter"/>
</dbReference>
<dbReference type="CDD" id="cd03671">
    <property type="entry name" value="NUDIX_Ap4A_hydrolase_plant_like"/>
    <property type="match status" value="1"/>
</dbReference>
<dbReference type="FunFam" id="3.90.79.10:FF:000001">
    <property type="entry name" value="RNA pyrophosphohydrolase"/>
    <property type="match status" value="1"/>
</dbReference>
<dbReference type="Gene3D" id="3.90.79.10">
    <property type="entry name" value="Nucleoside Triphosphate Pyrophosphohydrolase"/>
    <property type="match status" value="1"/>
</dbReference>
<dbReference type="HAMAP" id="MF_00298">
    <property type="entry name" value="Nudix_RppH"/>
    <property type="match status" value="1"/>
</dbReference>
<dbReference type="InterPro" id="IPR020476">
    <property type="entry name" value="Nudix_hydrolase"/>
</dbReference>
<dbReference type="InterPro" id="IPR015797">
    <property type="entry name" value="NUDIX_hydrolase-like_dom_sf"/>
</dbReference>
<dbReference type="InterPro" id="IPR020084">
    <property type="entry name" value="NUDIX_hydrolase_CS"/>
</dbReference>
<dbReference type="InterPro" id="IPR000086">
    <property type="entry name" value="NUDIX_hydrolase_dom"/>
</dbReference>
<dbReference type="InterPro" id="IPR022927">
    <property type="entry name" value="RppH"/>
</dbReference>
<dbReference type="NCBIfam" id="NF001934">
    <property type="entry name" value="PRK00714.1-1"/>
    <property type="match status" value="1"/>
</dbReference>
<dbReference type="NCBIfam" id="NF001936">
    <property type="entry name" value="PRK00714.1-3"/>
    <property type="match status" value="1"/>
</dbReference>
<dbReference type="NCBIfam" id="NF001937">
    <property type="entry name" value="PRK00714.1-4"/>
    <property type="match status" value="1"/>
</dbReference>
<dbReference type="NCBIfam" id="NF001938">
    <property type="entry name" value="PRK00714.1-5"/>
    <property type="match status" value="1"/>
</dbReference>
<dbReference type="PANTHER" id="PTHR23114">
    <property type="entry name" value="M7GPPPN-MRNA HYDROLASE"/>
    <property type="match status" value="1"/>
</dbReference>
<dbReference type="PANTHER" id="PTHR23114:SF17">
    <property type="entry name" value="M7GPPPN-MRNA HYDROLASE"/>
    <property type="match status" value="1"/>
</dbReference>
<dbReference type="Pfam" id="PF00293">
    <property type="entry name" value="NUDIX"/>
    <property type="match status" value="1"/>
</dbReference>
<dbReference type="PRINTS" id="PR00502">
    <property type="entry name" value="NUDIXFAMILY"/>
</dbReference>
<dbReference type="SUPFAM" id="SSF55811">
    <property type="entry name" value="Nudix"/>
    <property type="match status" value="1"/>
</dbReference>
<dbReference type="PROSITE" id="PS51462">
    <property type="entry name" value="NUDIX"/>
    <property type="match status" value="1"/>
</dbReference>
<dbReference type="PROSITE" id="PS00893">
    <property type="entry name" value="NUDIX_BOX"/>
    <property type="match status" value="1"/>
</dbReference>
<protein>
    <recommendedName>
        <fullName evidence="1">RNA pyrophosphohydrolase</fullName>
        <ecNumber evidence="1">3.6.1.-</ecNumber>
    </recommendedName>
    <alternativeName>
        <fullName evidence="1">(Di)nucleoside polyphosphate hydrolase</fullName>
    </alternativeName>
</protein>
<feature type="chain" id="PRO_1000204934" description="RNA pyrophosphohydrolase">
    <location>
        <begin position="1"/>
        <end position="177"/>
    </location>
</feature>
<feature type="domain" description="Nudix hydrolase" evidence="1">
    <location>
        <begin position="6"/>
        <end position="149"/>
    </location>
</feature>
<feature type="short sequence motif" description="Nudix box">
    <location>
        <begin position="38"/>
        <end position="59"/>
    </location>
</feature>
<keyword id="KW-0378">Hydrolase</keyword>
<keyword id="KW-0479">Metal-binding</keyword>